<evidence type="ECO:0000255" key="1"/>
<evidence type="ECO:0000255" key="2">
    <source>
        <dbReference type="PROSITE-ProRule" id="PRU00441"/>
    </source>
</evidence>
<evidence type="ECO:0000305" key="3"/>
<protein>
    <recommendedName>
        <fullName>Glutamine transport system permease protein GlnP</fullName>
    </recommendedName>
</protein>
<sequence length="219" mass="24364">MQFDWSAIWPAIPLLIEGAKMTLWISVLGLAGGLVIGLLAGFARTFGGWIANHVALVFIEVIRGTPIVVQVMFIYFALPMAFNDLRIDPFTAAVVTIMINSGAYIAEITRGAVLSIHKGFREAGLALGLSRWETIRYVILPLALRRMLPPLGNQWIISIKDTSLFIVIGVAELTRQGQEIIAGNFRALEIWSAVAVFYLIITLVLSFILRRLERRMKIL</sequence>
<comment type="function">
    <text>Part of the binding-protein-dependent transport system for glutamine; probably responsible for the translocation of the substrate across the membrane.</text>
</comment>
<comment type="subcellular location">
    <subcellularLocation>
        <location>Cell inner membrane</location>
        <topology>Multi-pass membrane protein</topology>
    </subcellularLocation>
</comment>
<comment type="induction">
    <text>By lack of glutamine.</text>
</comment>
<comment type="similarity">
    <text evidence="3">Belongs to the binding-protein-dependent transport system permease family. HisMQ subfamily.</text>
</comment>
<keyword id="KW-0029">Amino-acid transport</keyword>
<keyword id="KW-0997">Cell inner membrane</keyword>
<keyword id="KW-1003">Cell membrane</keyword>
<keyword id="KW-0472">Membrane</keyword>
<keyword id="KW-1185">Reference proteome</keyword>
<keyword id="KW-0812">Transmembrane</keyword>
<keyword id="KW-1133">Transmembrane helix</keyword>
<keyword id="KW-0813">Transport</keyword>
<feature type="chain" id="PRO_0000060030" description="Glutamine transport system permease protein GlnP">
    <location>
        <begin position="1"/>
        <end position="219"/>
    </location>
</feature>
<feature type="topological domain" description="Periplasmic" evidence="1">
    <location>
        <begin position="1"/>
        <end position="22"/>
    </location>
</feature>
<feature type="transmembrane region" description="Helical" evidence="2">
    <location>
        <begin position="23"/>
        <end position="43"/>
    </location>
</feature>
<feature type="topological domain" description="Cytoplasmic" evidence="1">
    <location>
        <begin position="44"/>
        <end position="53"/>
    </location>
</feature>
<feature type="transmembrane region" description="Helical" evidence="2">
    <location>
        <begin position="54"/>
        <end position="74"/>
    </location>
</feature>
<feature type="topological domain" description="Periplasmic" evidence="1">
    <location>
        <begin position="75"/>
        <end position="88"/>
    </location>
</feature>
<feature type="transmembrane region" description="Helical" evidence="2">
    <location>
        <begin position="89"/>
        <end position="109"/>
    </location>
</feature>
<feature type="topological domain" description="Cytoplasmic" evidence="1">
    <location>
        <begin position="110"/>
        <end position="150"/>
    </location>
</feature>
<feature type="transmembrane region" description="Helical" evidence="2">
    <location>
        <begin position="151"/>
        <end position="171"/>
    </location>
</feature>
<feature type="topological domain" description="Periplasmic" evidence="1">
    <location>
        <begin position="172"/>
        <end position="187"/>
    </location>
</feature>
<feature type="transmembrane region" description="Helical" evidence="2">
    <location>
        <begin position="188"/>
        <end position="208"/>
    </location>
</feature>
<feature type="topological domain" description="Cytoplasmic" evidence="1">
    <location>
        <begin position="209"/>
        <end position="219"/>
    </location>
</feature>
<feature type="domain" description="ABC transmembrane type-1" evidence="2">
    <location>
        <begin position="19"/>
        <end position="209"/>
    </location>
</feature>
<accession>P0AEQ6</accession>
<accession>P10345</accession>
<accession>P76825</accession>
<dbReference type="EMBL" id="X14180">
    <property type="protein sequence ID" value="CAA32383.1"/>
    <property type="molecule type" value="Genomic_DNA"/>
</dbReference>
<dbReference type="EMBL" id="U00096">
    <property type="protein sequence ID" value="AAC73897.1"/>
    <property type="molecule type" value="Genomic_DNA"/>
</dbReference>
<dbReference type="EMBL" id="AP009048">
    <property type="protein sequence ID" value="BAA35482.1"/>
    <property type="molecule type" value="Genomic_DNA"/>
</dbReference>
<dbReference type="PIR" id="S03182">
    <property type="entry name" value="QRECGP"/>
</dbReference>
<dbReference type="RefSeq" id="NP_415331.1">
    <property type="nucleotide sequence ID" value="NC_000913.3"/>
</dbReference>
<dbReference type="RefSeq" id="WP_001159065.1">
    <property type="nucleotide sequence ID" value="NZ_STEB01000019.1"/>
</dbReference>
<dbReference type="SMR" id="P0AEQ6"/>
<dbReference type="BioGRID" id="4259971">
    <property type="interactions" value="24"/>
</dbReference>
<dbReference type="ComplexPortal" id="CPX-4822">
    <property type="entry name" value="Glutamine ABC transporter complex"/>
</dbReference>
<dbReference type="DIP" id="DIP-47993N"/>
<dbReference type="FunCoup" id="P0AEQ6">
    <property type="interactions" value="323"/>
</dbReference>
<dbReference type="STRING" id="511145.b0810"/>
<dbReference type="TCDB" id="3.A.1.3.2">
    <property type="family name" value="the atp-binding cassette (abc) superfamily"/>
</dbReference>
<dbReference type="jPOST" id="P0AEQ6"/>
<dbReference type="PaxDb" id="511145-b0810"/>
<dbReference type="EnsemblBacteria" id="AAC73897">
    <property type="protein sequence ID" value="AAC73897"/>
    <property type="gene ID" value="b0810"/>
</dbReference>
<dbReference type="GeneID" id="93776618"/>
<dbReference type="GeneID" id="945621"/>
<dbReference type="KEGG" id="ecj:JW0795"/>
<dbReference type="KEGG" id="eco:b0810"/>
<dbReference type="KEGG" id="ecoc:C3026_05100"/>
<dbReference type="PATRIC" id="fig|1411691.4.peg.1468"/>
<dbReference type="EchoBASE" id="EB0383"/>
<dbReference type="eggNOG" id="COG0765">
    <property type="taxonomic scope" value="Bacteria"/>
</dbReference>
<dbReference type="HOGENOM" id="CLU_019602_1_0_6"/>
<dbReference type="InParanoid" id="P0AEQ6"/>
<dbReference type="OMA" id="YRVIETW"/>
<dbReference type="OrthoDB" id="6580405at2"/>
<dbReference type="PhylomeDB" id="P0AEQ6"/>
<dbReference type="BioCyc" id="EcoCyc:GLNP-MONOMER"/>
<dbReference type="BioCyc" id="MetaCyc:GLNP-MONOMER"/>
<dbReference type="PRO" id="PR:P0AEQ6"/>
<dbReference type="Proteomes" id="UP000000625">
    <property type="component" value="Chromosome"/>
</dbReference>
<dbReference type="GO" id="GO:0055052">
    <property type="term" value="C:ATP-binding cassette (ABC) transporter complex, substrate-binding subunit-containing"/>
    <property type="evidence" value="ECO:0000303"/>
    <property type="project" value="ComplexPortal"/>
</dbReference>
<dbReference type="GO" id="GO:0016020">
    <property type="term" value="C:membrane"/>
    <property type="evidence" value="ECO:0000303"/>
    <property type="project" value="ComplexPortal"/>
</dbReference>
<dbReference type="GO" id="GO:0005886">
    <property type="term" value="C:plasma membrane"/>
    <property type="evidence" value="ECO:0000314"/>
    <property type="project" value="EcoCyc"/>
</dbReference>
<dbReference type="GO" id="GO:0015186">
    <property type="term" value="F:L-glutamine transmembrane transporter activity"/>
    <property type="evidence" value="ECO:0000269"/>
    <property type="project" value="EcoCyc"/>
</dbReference>
<dbReference type="GO" id="GO:0006865">
    <property type="term" value="P:amino acid transport"/>
    <property type="evidence" value="ECO:0000318"/>
    <property type="project" value="GO_Central"/>
</dbReference>
<dbReference type="GO" id="GO:0006868">
    <property type="term" value="P:glutamine transport"/>
    <property type="evidence" value="ECO:0000269"/>
    <property type="project" value="EcoCyc"/>
</dbReference>
<dbReference type="GO" id="GO:1903803">
    <property type="term" value="P:L-glutamine import across plasma membrane"/>
    <property type="evidence" value="ECO:0000303"/>
    <property type="project" value="ComplexPortal"/>
</dbReference>
<dbReference type="CDD" id="cd06261">
    <property type="entry name" value="TM_PBP2"/>
    <property type="match status" value="1"/>
</dbReference>
<dbReference type="FunFam" id="1.10.3720.10:FF:000011">
    <property type="entry name" value="Glutamine ABC transporter permease GlnP"/>
    <property type="match status" value="1"/>
</dbReference>
<dbReference type="Gene3D" id="1.10.3720.10">
    <property type="entry name" value="MetI-like"/>
    <property type="match status" value="1"/>
</dbReference>
<dbReference type="InterPro" id="IPR010065">
    <property type="entry name" value="AA_ABC_transptr_permease_3TM"/>
</dbReference>
<dbReference type="InterPro" id="IPR043429">
    <property type="entry name" value="ArtM/GltK/GlnP/TcyL/YhdX-like"/>
</dbReference>
<dbReference type="InterPro" id="IPR000515">
    <property type="entry name" value="MetI-like"/>
</dbReference>
<dbReference type="InterPro" id="IPR035906">
    <property type="entry name" value="MetI-like_sf"/>
</dbReference>
<dbReference type="NCBIfam" id="TIGR01726">
    <property type="entry name" value="HEQRo_perm_3TM"/>
    <property type="match status" value="1"/>
</dbReference>
<dbReference type="NCBIfam" id="NF007028">
    <property type="entry name" value="PRK09494.1"/>
    <property type="match status" value="1"/>
</dbReference>
<dbReference type="PANTHER" id="PTHR30614:SF20">
    <property type="entry name" value="GLUTAMINE TRANSPORT SYSTEM PERMEASE PROTEIN GLNP"/>
    <property type="match status" value="1"/>
</dbReference>
<dbReference type="PANTHER" id="PTHR30614">
    <property type="entry name" value="MEMBRANE COMPONENT OF AMINO ACID ABC TRANSPORTER"/>
    <property type="match status" value="1"/>
</dbReference>
<dbReference type="Pfam" id="PF00528">
    <property type="entry name" value="BPD_transp_1"/>
    <property type="match status" value="1"/>
</dbReference>
<dbReference type="SUPFAM" id="SSF161098">
    <property type="entry name" value="MetI-like"/>
    <property type="match status" value="1"/>
</dbReference>
<dbReference type="PROSITE" id="PS50928">
    <property type="entry name" value="ABC_TM1"/>
    <property type="match status" value="1"/>
</dbReference>
<reference key="1">
    <citation type="journal article" date="1986" name="Mol. Gen. Genet.">
        <title>Cloning and complete nucleotide sequence of the Escherichia coli glutamine permease operon (glnHPQ).</title>
        <authorList>
            <person name="Nohno T."/>
            <person name="Saito T."/>
            <person name="Hong J."/>
        </authorList>
    </citation>
    <scope>NUCLEOTIDE SEQUENCE [GENOMIC DNA]</scope>
    <source>
        <strain>K12</strain>
    </source>
</reference>
<reference key="2">
    <citation type="journal article" date="1996" name="DNA Res.">
        <title>A 718-kb DNA sequence of the Escherichia coli K-12 genome corresponding to the 12.7-28.0 min region on the linkage map.</title>
        <authorList>
            <person name="Oshima T."/>
            <person name="Aiba H."/>
            <person name="Baba T."/>
            <person name="Fujita K."/>
            <person name="Hayashi K."/>
            <person name="Honjo A."/>
            <person name="Ikemoto K."/>
            <person name="Inada T."/>
            <person name="Itoh T."/>
            <person name="Kajihara M."/>
            <person name="Kanai K."/>
            <person name="Kashimoto K."/>
            <person name="Kimura S."/>
            <person name="Kitagawa M."/>
            <person name="Makino K."/>
            <person name="Masuda S."/>
            <person name="Miki T."/>
            <person name="Mizobuchi K."/>
            <person name="Mori H."/>
            <person name="Motomura K."/>
            <person name="Nakamura Y."/>
            <person name="Nashimoto H."/>
            <person name="Nishio Y."/>
            <person name="Saito N."/>
            <person name="Sampei G."/>
            <person name="Seki Y."/>
            <person name="Tagami H."/>
            <person name="Takemoto K."/>
            <person name="Wada C."/>
            <person name="Yamamoto Y."/>
            <person name="Yano M."/>
            <person name="Horiuchi T."/>
        </authorList>
    </citation>
    <scope>NUCLEOTIDE SEQUENCE [LARGE SCALE GENOMIC DNA]</scope>
    <source>
        <strain>K12 / W3110 / ATCC 27325 / DSM 5911</strain>
    </source>
</reference>
<reference key="3">
    <citation type="journal article" date="1997" name="Science">
        <title>The complete genome sequence of Escherichia coli K-12.</title>
        <authorList>
            <person name="Blattner F.R."/>
            <person name="Plunkett G. III"/>
            <person name="Bloch C.A."/>
            <person name="Perna N.T."/>
            <person name="Burland V."/>
            <person name="Riley M."/>
            <person name="Collado-Vides J."/>
            <person name="Glasner J.D."/>
            <person name="Rode C.K."/>
            <person name="Mayhew G.F."/>
            <person name="Gregor J."/>
            <person name="Davis N.W."/>
            <person name="Kirkpatrick H.A."/>
            <person name="Goeden M.A."/>
            <person name="Rose D.J."/>
            <person name="Mau B."/>
            <person name="Shao Y."/>
        </authorList>
    </citation>
    <scope>NUCLEOTIDE SEQUENCE [LARGE SCALE GENOMIC DNA]</scope>
    <source>
        <strain>K12 / MG1655 / ATCC 47076</strain>
    </source>
</reference>
<reference key="4">
    <citation type="journal article" date="2006" name="Mol. Syst. Biol.">
        <title>Highly accurate genome sequences of Escherichia coli K-12 strains MG1655 and W3110.</title>
        <authorList>
            <person name="Hayashi K."/>
            <person name="Morooka N."/>
            <person name="Yamamoto Y."/>
            <person name="Fujita K."/>
            <person name="Isono K."/>
            <person name="Choi S."/>
            <person name="Ohtsubo E."/>
            <person name="Baba T."/>
            <person name="Wanner B.L."/>
            <person name="Mori H."/>
            <person name="Horiuchi T."/>
        </authorList>
    </citation>
    <scope>NUCLEOTIDE SEQUENCE [LARGE SCALE GENOMIC DNA]</scope>
    <source>
        <strain>K12 / W3110 / ATCC 27325 / DSM 5911</strain>
    </source>
</reference>
<reference key="5">
    <citation type="journal article" date="2005" name="Science">
        <title>Global topology analysis of the Escherichia coli inner membrane proteome.</title>
        <authorList>
            <person name="Daley D.O."/>
            <person name="Rapp M."/>
            <person name="Granseth E."/>
            <person name="Melen K."/>
            <person name="Drew D."/>
            <person name="von Heijne G."/>
        </authorList>
    </citation>
    <scope>TOPOLOGY [LARGE SCALE ANALYSIS]</scope>
    <source>
        <strain>K12 / MG1655 / ATCC 47076</strain>
    </source>
</reference>
<organism>
    <name type="scientific">Escherichia coli (strain K12)</name>
    <dbReference type="NCBI Taxonomy" id="83333"/>
    <lineage>
        <taxon>Bacteria</taxon>
        <taxon>Pseudomonadati</taxon>
        <taxon>Pseudomonadota</taxon>
        <taxon>Gammaproteobacteria</taxon>
        <taxon>Enterobacterales</taxon>
        <taxon>Enterobacteriaceae</taxon>
        <taxon>Escherichia</taxon>
    </lineage>
</organism>
<gene>
    <name type="primary">glnP</name>
    <name type="ordered locus">b0810</name>
    <name type="ordered locus">JW0795</name>
</gene>
<name>GLNP_ECOLI</name>
<proteinExistence type="evidence at protein level"/>